<sequence>MIVNYLKHKFYNLLTTMIVLFIFVLSGAIFLTFLGFGLYGLSRILIYFRLGDFTYNRSMYDNLLYYGSYIIFGYFIIFAVEHLMDYFRKMLPENAYFRGATFHLISYTVATTLFYFIIHLNYVYINIDFWVIMVIIGFLYVCKLQFYPESKNLNNRK</sequence>
<organism>
    <name type="scientific">Staphylococcus aureus (strain USA300 / TCH1516)</name>
    <dbReference type="NCBI Taxonomy" id="451516"/>
    <lineage>
        <taxon>Bacteria</taxon>
        <taxon>Bacillati</taxon>
        <taxon>Bacillota</taxon>
        <taxon>Bacilli</taxon>
        <taxon>Bacillales</taxon>
        <taxon>Staphylococcaceae</taxon>
        <taxon>Staphylococcus</taxon>
    </lineage>
</organism>
<dbReference type="EMBL" id="CP000730">
    <property type="protein sequence ID" value="ABX30154.1"/>
    <property type="molecule type" value="Genomic_DNA"/>
</dbReference>
<dbReference type="RefSeq" id="WP_000636857.1">
    <property type="nucleotide sequence ID" value="NC_010079.1"/>
</dbReference>
<dbReference type="KEGG" id="sax:USA300HOU_2159"/>
<dbReference type="HOGENOM" id="CLU_151983_0_0_9"/>
<dbReference type="GO" id="GO:0005886">
    <property type="term" value="C:plasma membrane"/>
    <property type="evidence" value="ECO:0007669"/>
    <property type="project" value="UniProtKB-SubCell"/>
</dbReference>
<dbReference type="InterPro" id="IPR031396">
    <property type="entry name" value="SepA"/>
</dbReference>
<dbReference type="Pfam" id="PF17080">
    <property type="entry name" value="SepA"/>
    <property type="match status" value="1"/>
</dbReference>
<name>MDEP_STAAT</name>
<keyword id="KW-1003">Cell membrane</keyword>
<keyword id="KW-0472">Membrane</keyword>
<keyword id="KW-0812">Transmembrane</keyword>
<keyword id="KW-1133">Transmembrane helix</keyword>
<keyword id="KW-0813">Transport</keyword>
<feature type="chain" id="PRO_0000351493" description="Multidrug resistance efflux pump SepA">
    <location>
        <begin position="1"/>
        <end position="157"/>
    </location>
</feature>
<feature type="transmembrane region" description="Helical" evidence="2">
    <location>
        <begin position="18"/>
        <end position="38"/>
    </location>
</feature>
<feature type="transmembrane region" description="Helical" evidence="2">
    <location>
        <begin position="63"/>
        <end position="83"/>
    </location>
</feature>
<feature type="transmembrane region" description="Helical" evidence="2">
    <location>
        <begin position="100"/>
        <end position="120"/>
    </location>
</feature>
<feature type="transmembrane region" description="Helical" evidence="2">
    <location>
        <begin position="122"/>
        <end position="142"/>
    </location>
</feature>
<comment type="function">
    <text evidence="1">Involved in multidrug efflux.</text>
</comment>
<comment type="subcellular location">
    <subcellularLocation>
        <location evidence="3">Cell membrane</location>
        <topology evidence="3">Multi-pass membrane protein</topology>
    </subcellularLocation>
</comment>
<comment type="similarity">
    <text evidence="3">Belongs to the multidrug resistance efflux pump SepA family.</text>
</comment>
<proteinExistence type="inferred from homology"/>
<evidence type="ECO:0000250" key="1"/>
<evidence type="ECO:0000255" key="2"/>
<evidence type="ECO:0000305" key="3"/>
<accession>A8YYD4</accession>
<protein>
    <recommendedName>
        <fullName>Multidrug resistance efflux pump SepA</fullName>
    </recommendedName>
    <alternativeName>
        <fullName>Antiseptic resistance protein SepA</fullName>
    </alternativeName>
    <alternativeName>
        <fullName>Staphylococcal efflux pump A</fullName>
    </alternativeName>
</protein>
<gene>
    <name type="primary">sepA</name>
    <name type="ordered locus">USA300HOU_2159</name>
</gene>
<reference key="1">
    <citation type="journal article" date="2007" name="BMC Microbiol.">
        <title>Subtle genetic changes enhance virulence of methicillin resistant and sensitive Staphylococcus aureus.</title>
        <authorList>
            <person name="Highlander S.K."/>
            <person name="Hulten K.G."/>
            <person name="Qin X."/>
            <person name="Jiang H."/>
            <person name="Yerrapragada S."/>
            <person name="Mason E.O. Jr."/>
            <person name="Shang Y."/>
            <person name="Williams T.M."/>
            <person name="Fortunov R.M."/>
            <person name="Liu Y."/>
            <person name="Igboeli O."/>
            <person name="Petrosino J."/>
            <person name="Tirumalai M."/>
            <person name="Uzman A."/>
            <person name="Fox G.E."/>
            <person name="Cardenas A.M."/>
            <person name="Muzny D.M."/>
            <person name="Hemphill L."/>
            <person name="Ding Y."/>
            <person name="Dugan S."/>
            <person name="Blyth P.R."/>
            <person name="Buhay C.J."/>
            <person name="Dinh H.H."/>
            <person name="Hawes A.C."/>
            <person name="Holder M."/>
            <person name="Kovar C.L."/>
            <person name="Lee S.L."/>
            <person name="Liu W."/>
            <person name="Nazareth L.V."/>
            <person name="Wang Q."/>
            <person name="Zhou J."/>
            <person name="Kaplan S.L."/>
            <person name="Weinstock G.M."/>
        </authorList>
    </citation>
    <scope>NUCLEOTIDE SEQUENCE [LARGE SCALE GENOMIC DNA]</scope>
    <source>
        <strain>USA300 / TCH1516</strain>
    </source>
</reference>